<evidence type="ECO:0000255" key="1">
    <source>
        <dbReference type="HAMAP-Rule" id="MF_01244"/>
    </source>
</evidence>
<organism>
    <name type="scientific">Natronomonas pharaonis (strain ATCC 35678 / DSM 2160 / CIP 103997 / JCM 8858 / NBRC 14720 / NCIMB 2260 / Gabara)</name>
    <name type="common">Halobacterium pharaonis</name>
    <dbReference type="NCBI Taxonomy" id="348780"/>
    <lineage>
        <taxon>Archaea</taxon>
        <taxon>Methanobacteriati</taxon>
        <taxon>Methanobacteriota</taxon>
        <taxon>Stenosarchaea group</taxon>
        <taxon>Halobacteria</taxon>
        <taxon>Halobacteriales</taxon>
        <taxon>Haloarculaceae</taxon>
        <taxon>Natronomonas</taxon>
    </lineage>
</organism>
<proteinExistence type="inferred from homology"/>
<reference key="1">
    <citation type="journal article" date="2005" name="Genome Res.">
        <title>Living with two extremes: conclusions from the genome sequence of Natronomonas pharaonis.</title>
        <authorList>
            <person name="Falb M."/>
            <person name="Pfeiffer F."/>
            <person name="Palm P."/>
            <person name="Rodewald K."/>
            <person name="Hickmann V."/>
            <person name="Tittor J."/>
            <person name="Oesterhelt D."/>
        </authorList>
    </citation>
    <scope>NUCLEOTIDE SEQUENCE [LARGE SCALE GENOMIC DNA]</scope>
    <source>
        <strain>ATCC 35678 / DSM 2160 / CIP 103997 / JCM 8858 / NBRC 14720 / NCIMB 2260 / Gabara</strain>
    </source>
</reference>
<dbReference type="EC" id="1.4.1.24" evidence="1"/>
<dbReference type="EMBL" id="CR936257">
    <property type="protein sequence ID" value="CAI49210.1"/>
    <property type="molecule type" value="Genomic_DNA"/>
</dbReference>
<dbReference type="RefSeq" id="WP_011322837.1">
    <property type="nucleotide sequence ID" value="NC_007426.1"/>
</dbReference>
<dbReference type="SMR" id="Q3IRN3"/>
<dbReference type="STRING" id="348780.NP_2238A"/>
<dbReference type="EnsemblBacteria" id="CAI49210">
    <property type="protein sequence ID" value="CAI49210"/>
    <property type="gene ID" value="NP_2238A"/>
</dbReference>
<dbReference type="GeneID" id="3701388"/>
<dbReference type="KEGG" id="nph:NP_2238A"/>
<dbReference type="eggNOG" id="arCOG04353">
    <property type="taxonomic scope" value="Archaea"/>
</dbReference>
<dbReference type="HOGENOM" id="CLU_056379_0_0_2"/>
<dbReference type="OrthoDB" id="10265at2157"/>
<dbReference type="Proteomes" id="UP000002698">
    <property type="component" value="Chromosome"/>
</dbReference>
<dbReference type="GO" id="GO:0003856">
    <property type="term" value="F:3-dehydroquinate synthase activity"/>
    <property type="evidence" value="ECO:0007669"/>
    <property type="project" value="InterPro"/>
</dbReference>
<dbReference type="GO" id="GO:0102042">
    <property type="term" value="F:dehydroquinate synthase activity"/>
    <property type="evidence" value="ECO:0007669"/>
    <property type="project" value="UniProtKB-EC"/>
</dbReference>
<dbReference type="GO" id="GO:0051287">
    <property type="term" value="F:NAD binding"/>
    <property type="evidence" value="ECO:0007669"/>
    <property type="project" value="UniProtKB-UniRule"/>
</dbReference>
<dbReference type="GO" id="GO:0008652">
    <property type="term" value="P:amino acid biosynthetic process"/>
    <property type="evidence" value="ECO:0007669"/>
    <property type="project" value="UniProtKB-KW"/>
</dbReference>
<dbReference type="GO" id="GO:0009073">
    <property type="term" value="P:aromatic amino acid family biosynthetic process"/>
    <property type="evidence" value="ECO:0007669"/>
    <property type="project" value="UniProtKB-UniRule"/>
</dbReference>
<dbReference type="HAMAP" id="MF_01244">
    <property type="entry name" value="Arch_DHQ_synthase"/>
    <property type="match status" value="1"/>
</dbReference>
<dbReference type="InterPro" id="IPR002812">
    <property type="entry name" value="DHQ_synth"/>
</dbReference>
<dbReference type="NCBIfam" id="NF002623">
    <property type="entry name" value="PRK02290.1-1"/>
    <property type="match status" value="1"/>
</dbReference>
<dbReference type="PANTHER" id="PTHR33563">
    <property type="match status" value="1"/>
</dbReference>
<dbReference type="PANTHER" id="PTHR33563:SF1">
    <property type="entry name" value="3-DEHYDROQUINATE SYNTHASE"/>
    <property type="match status" value="1"/>
</dbReference>
<dbReference type="Pfam" id="PF01959">
    <property type="entry name" value="DHQS"/>
    <property type="match status" value="1"/>
</dbReference>
<dbReference type="PIRSF" id="PIRSF006655">
    <property type="entry name" value="DHQ_synth"/>
    <property type="match status" value="1"/>
</dbReference>
<feature type="chain" id="PRO_1000067070" description="3-dehydroquinate synthase">
    <location>
        <begin position="1"/>
        <end position="388"/>
    </location>
</feature>
<keyword id="KW-0028">Amino-acid biosynthesis</keyword>
<keyword id="KW-0057">Aromatic amino acid biosynthesis</keyword>
<keyword id="KW-0520">NAD</keyword>
<keyword id="KW-0560">Oxidoreductase</keyword>
<keyword id="KW-1185">Reference proteome</keyword>
<gene>
    <name evidence="1" type="primary">aroB'</name>
    <name type="ordered locus">NP_2238A</name>
</gene>
<comment type="function">
    <text evidence="1">Catalyzes the oxidative deamination and cyclization of 2-amino-3,7-dideoxy-D-threo-hept-6-ulosonic acid (ADH) to yield 3-dehydroquinate (DHQ), which is fed into the canonical shikimic pathway of aromatic amino acid biosynthesis.</text>
</comment>
<comment type="catalytic activity">
    <reaction evidence="1">
        <text>2-amino-2,3,7-trideoxy-D-lyxo-hept-6-ulosonate + NAD(+) + H2O = 3-dehydroquinate + NH4(+) + NADH + H(+)</text>
        <dbReference type="Rhea" id="RHEA:25956"/>
        <dbReference type="ChEBI" id="CHEBI:15377"/>
        <dbReference type="ChEBI" id="CHEBI:15378"/>
        <dbReference type="ChEBI" id="CHEBI:28938"/>
        <dbReference type="ChEBI" id="CHEBI:32364"/>
        <dbReference type="ChEBI" id="CHEBI:57540"/>
        <dbReference type="ChEBI" id="CHEBI:57945"/>
        <dbReference type="ChEBI" id="CHEBI:58859"/>
        <dbReference type="EC" id="1.4.1.24"/>
    </reaction>
</comment>
<comment type="similarity">
    <text evidence="1">Belongs to the archaeal-type DHQ synthase family.</text>
</comment>
<name>DHQS_NATPD</name>
<accession>Q3IRN3</accession>
<protein>
    <recommendedName>
        <fullName evidence="1">3-dehydroquinate synthase</fullName>
        <shortName evidence="1">DHQ synthase</shortName>
        <ecNumber evidence="1">1.4.1.24</ecNumber>
    </recommendedName>
    <alternativeName>
        <fullName evidence="1">3-dehydroquinate synthase II</fullName>
    </alternativeName>
</protein>
<sequence length="388" mass="42340">MTRSVWLKADDAVGDWEARKRRITAGLEAGVDWVLVDERDVSRVRELGQVNVAAFAGDDVHVMDAEEQPDAEPDAVIVGKEGEGDGTVDLPSDFSGSADLTTLRRAEAPAGAYVRILDQDYESFAETAAVDADYTIVIGDDWQIIPLENLIARIGDETDLIAGVQTAEEAETAFETLELGADAVLLDTDNPDEIRATVEARDATERETLDLQRATVTEIEETGSADRVCVDTASMLEHDEGMLVGSMSRGLFFVHAETADSPYVASRPFRVNAGAVHAYVRTPDGGTKYLAELSSGDEVQVVDTDGNTREAIVGRAKIEKRPMFRIEAELENGDRIETLLQNAETIKVATDEGRRSVTELEAGDELLIYYEDVARHFGEAVEESIIEK</sequence>